<accession>Q49XN8</accession>
<keyword id="KW-0963">Cytoplasm</keyword>
<keyword id="KW-0489">Methyltransferase</keyword>
<keyword id="KW-0545">Nucleotide biosynthesis</keyword>
<keyword id="KW-1185">Reference proteome</keyword>
<keyword id="KW-0808">Transferase</keyword>
<sequence length="318" mass="36954">MLNAFDQAYHQLCEEILEIGKQKNDRTNTGTISKFGHQLRFDLSKGFPLLTTKKVSFKLIATELLWFIKGDTNIKYLLQYNNNIWNEWAFEKFVQSKDYNGPDMTDFGHRAQKDESFNLIYKDEMNQFKKRILNDDDFAKKYGDLGNVYGKQWRDWEDKYGNHYDQLKTVINQIKTNPNSRRHIVSAWNPTEIDTMALPPCHTMFQFYVQDGKLSCQLYQRSADIFLGVPFNIASYSLLTHLIAKECGLEVGEFVHTFGDAHIYSNHIEAIETQLARESYNPPTLNINSDASIFDIDYEDLEIVDYESHPAIKAPIAV</sequence>
<reference key="1">
    <citation type="journal article" date="2005" name="Proc. Natl. Acad. Sci. U.S.A.">
        <title>Whole genome sequence of Staphylococcus saprophyticus reveals the pathogenesis of uncomplicated urinary tract infection.</title>
        <authorList>
            <person name="Kuroda M."/>
            <person name="Yamashita A."/>
            <person name="Hirakawa H."/>
            <person name="Kumano M."/>
            <person name="Morikawa K."/>
            <person name="Higashide M."/>
            <person name="Maruyama A."/>
            <person name="Inose Y."/>
            <person name="Matoba K."/>
            <person name="Toh H."/>
            <person name="Kuhara S."/>
            <person name="Hattori M."/>
            <person name="Ohta T."/>
        </authorList>
    </citation>
    <scope>NUCLEOTIDE SEQUENCE [LARGE SCALE GENOMIC DNA]</scope>
    <source>
        <strain>ATCC 15305 / DSM 20229 / NCIMB 8711 / NCTC 7292 / S-41</strain>
    </source>
</reference>
<dbReference type="EC" id="2.1.1.45" evidence="1"/>
<dbReference type="EMBL" id="AP008934">
    <property type="protein sequence ID" value="BAE18457.1"/>
    <property type="molecule type" value="Genomic_DNA"/>
</dbReference>
<dbReference type="RefSeq" id="WP_011303096.1">
    <property type="nucleotide sequence ID" value="NZ_MTGA01000038.1"/>
</dbReference>
<dbReference type="SMR" id="Q49XN8"/>
<dbReference type="GeneID" id="3616552"/>
<dbReference type="KEGG" id="ssp:SSP1312"/>
<dbReference type="eggNOG" id="COG0207">
    <property type="taxonomic scope" value="Bacteria"/>
</dbReference>
<dbReference type="HOGENOM" id="CLU_021669_0_2_9"/>
<dbReference type="OrthoDB" id="9774633at2"/>
<dbReference type="UniPathway" id="UPA00575"/>
<dbReference type="Proteomes" id="UP000006371">
    <property type="component" value="Chromosome"/>
</dbReference>
<dbReference type="GO" id="GO:0005829">
    <property type="term" value="C:cytosol"/>
    <property type="evidence" value="ECO:0007669"/>
    <property type="project" value="TreeGrafter"/>
</dbReference>
<dbReference type="GO" id="GO:0004799">
    <property type="term" value="F:thymidylate synthase activity"/>
    <property type="evidence" value="ECO:0007669"/>
    <property type="project" value="UniProtKB-UniRule"/>
</dbReference>
<dbReference type="GO" id="GO:0006231">
    <property type="term" value="P:dTMP biosynthetic process"/>
    <property type="evidence" value="ECO:0007669"/>
    <property type="project" value="UniProtKB-UniRule"/>
</dbReference>
<dbReference type="GO" id="GO:0006235">
    <property type="term" value="P:dTTP biosynthetic process"/>
    <property type="evidence" value="ECO:0007669"/>
    <property type="project" value="UniProtKB-UniRule"/>
</dbReference>
<dbReference type="GO" id="GO:0032259">
    <property type="term" value="P:methylation"/>
    <property type="evidence" value="ECO:0007669"/>
    <property type="project" value="UniProtKB-KW"/>
</dbReference>
<dbReference type="CDD" id="cd00351">
    <property type="entry name" value="TS_Pyrimidine_HMase"/>
    <property type="match status" value="1"/>
</dbReference>
<dbReference type="Gene3D" id="3.30.572.10">
    <property type="entry name" value="Thymidylate synthase/dCMP hydroxymethylase domain"/>
    <property type="match status" value="1"/>
</dbReference>
<dbReference type="HAMAP" id="MF_00008">
    <property type="entry name" value="Thymidy_synth_bact"/>
    <property type="match status" value="1"/>
</dbReference>
<dbReference type="InterPro" id="IPR045097">
    <property type="entry name" value="Thymidate_synth/dCMP_Mease"/>
</dbReference>
<dbReference type="InterPro" id="IPR023451">
    <property type="entry name" value="Thymidate_synth/dCMP_Mease_dom"/>
</dbReference>
<dbReference type="InterPro" id="IPR036926">
    <property type="entry name" value="Thymidate_synth/dCMP_Mease_sf"/>
</dbReference>
<dbReference type="InterPro" id="IPR000398">
    <property type="entry name" value="Thymidylate_synthase"/>
</dbReference>
<dbReference type="InterPro" id="IPR020940">
    <property type="entry name" value="Thymidylate_synthase_AS"/>
</dbReference>
<dbReference type="NCBIfam" id="NF002496">
    <property type="entry name" value="PRK01827.1-2"/>
    <property type="match status" value="1"/>
</dbReference>
<dbReference type="NCBIfam" id="TIGR03284">
    <property type="entry name" value="thym_sym"/>
    <property type="match status" value="1"/>
</dbReference>
<dbReference type="PANTHER" id="PTHR11548:SF9">
    <property type="entry name" value="THYMIDYLATE SYNTHASE"/>
    <property type="match status" value="1"/>
</dbReference>
<dbReference type="PANTHER" id="PTHR11548">
    <property type="entry name" value="THYMIDYLATE SYNTHASE 1"/>
    <property type="match status" value="1"/>
</dbReference>
<dbReference type="Pfam" id="PF00303">
    <property type="entry name" value="Thymidylat_synt"/>
    <property type="match status" value="1"/>
</dbReference>
<dbReference type="PRINTS" id="PR00108">
    <property type="entry name" value="THYMDSNTHASE"/>
</dbReference>
<dbReference type="SUPFAM" id="SSF55831">
    <property type="entry name" value="Thymidylate synthase/dCMP hydroxymethylase"/>
    <property type="match status" value="1"/>
</dbReference>
<dbReference type="PROSITE" id="PS00091">
    <property type="entry name" value="THYMIDYLATE_SYNTHASE"/>
    <property type="match status" value="1"/>
</dbReference>
<comment type="function">
    <text evidence="1">Catalyzes the reductive methylation of 2'-deoxyuridine-5'-monophosphate (dUMP) to 2'-deoxythymidine-5'-monophosphate (dTMP) while utilizing 5,10-methylenetetrahydrofolate (mTHF) as the methyl donor and reductant in the reaction, yielding dihydrofolate (DHF) as a by-product. This enzymatic reaction provides an intracellular de novo source of dTMP, an essential precursor for DNA biosynthesis.</text>
</comment>
<comment type="catalytic activity">
    <reaction evidence="1">
        <text>dUMP + (6R)-5,10-methylene-5,6,7,8-tetrahydrofolate = 7,8-dihydrofolate + dTMP</text>
        <dbReference type="Rhea" id="RHEA:12104"/>
        <dbReference type="ChEBI" id="CHEBI:15636"/>
        <dbReference type="ChEBI" id="CHEBI:57451"/>
        <dbReference type="ChEBI" id="CHEBI:63528"/>
        <dbReference type="ChEBI" id="CHEBI:246422"/>
        <dbReference type="EC" id="2.1.1.45"/>
    </reaction>
</comment>
<comment type="pathway">
    <text evidence="1">Pyrimidine metabolism; dTTP biosynthesis.</text>
</comment>
<comment type="subunit">
    <text evidence="1">Homodimer.</text>
</comment>
<comment type="subcellular location">
    <subcellularLocation>
        <location evidence="1">Cytoplasm</location>
    </subcellularLocation>
</comment>
<comment type="similarity">
    <text evidence="1">Belongs to the thymidylate synthase family. Bacterial-type ThyA subfamily.</text>
</comment>
<proteinExistence type="inferred from homology"/>
<name>TYSY_STAS1</name>
<gene>
    <name evidence="1" type="primary">thyA</name>
    <name type="ordered locus">SSP1312</name>
</gene>
<organism>
    <name type="scientific">Staphylococcus saprophyticus subsp. saprophyticus (strain ATCC 15305 / DSM 20229 / NCIMB 8711 / NCTC 7292 / S-41)</name>
    <dbReference type="NCBI Taxonomy" id="342451"/>
    <lineage>
        <taxon>Bacteria</taxon>
        <taxon>Bacillati</taxon>
        <taxon>Bacillota</taxon>
        <taxon>Bacilli</taxon>
        <taxon>Bacillales</taxon>
        <taxon>Staphylococcaceae</taxon>
        <taxon>Staphylococcus</taxon>
    </lineage>
</organism>
<feature type="chain" id="PRO_1000000690" description="Thymidylate synthase">
    <location>
        <begin position="1"/>
        <end position="318"/>
    </location>
</feature>
<feature type="active site" description="Nucleophile" evidence="1">
    <location>
        <position position="201"/>
    </location>
</feature>
<feature type="binding site" description="in other chain" evidence="1">
    <location>
        <position position="26"/>
    </location>
    <ligand>
        <name>dUMP</name>
        <dbReference type="ChEBI" id="CHEBI:246422"/>
        <note>ligand shared between dimeric partners</note>
    </ligand>
</feature>
<feature type="binding site" evidence="1">
    <location>
        <begin position="181"/>
        <end position="182"/>
    </location>
    <ligand>
        <name>dUMP</name>
        <dbReference type="ChEBI" id="CHEBI:246422"/>
        <note>ligand shared between dimeric partners</note>
    </ligand>
</feature>
<feature type="binding site" description="in other chain" evidence="1">
    <location>
        <begin position="221"/>
        <end position="224"/>
    </location>
    <ligand>
        <name>dUMP</name>
        <dbReference type="ChEBI" id="CHEBI:246422"/>
        <note>ligand shared between dimeric partners</note>
    </ligand>
</feature>
<feature type="binding site" evidence="1">
    <location>
        <position position="224"/>
    </location>
    <ligand>
        <name>(6R)-5,10-methylene-5,6,7,8-tetrahydrofolate</name>
        <dbReference type="ChEBI" id="CHEBI:15636"/>
    </ligand>
</feature>
<feature type="binding site" description="in other chain" evidence="1">
    <location>
        <position position="232"/>
    </location>
    <ligand>
        <name>dUMP</name>
        <dbReference type="ChEBI" id="CHEBI:246422"/>
        <note>ligand shared between dimeric partners</note>
    </ligand>
</feature>
<feature type="binding site" description="in other chain" evidence="1">
    <location>
        <begin position="262"/>
        <end position="264"/>
    </location>
    <ligand>
        <name>dUMP</name>
        <dbReference type="ChEBI" id="CHEBI:246422"/>
        <note>ligand shared between dimeric partners</note>
    </ligand>
</feature>
<feature type="binding site" evidence="1">
    <location>
        <position position="317"/>
    </location>
    <ligand>
        <name>(6R)-5,10-methylene-5,6,7,8-tetrahydrofolate</name>
        <dbReference type="ChEBI" id="CHEBI:15636"/>
    </ligand>
</feature>
<protein>
    <recommendedName>
        <fullName evidence="1">Thymidylate synthase</fullName>
        <shortName evidence="1">TS</shortName>
        <shortName evidence="1">TSase</shortName>
        <ecNumber evidence="1">2.1.1.45</ecNumber>
    </recommendedName>
</protein>
<evidence type="ECO:0000255" key="1">
    <source>
        <dbReference type="HAMAP-Rule" id="MF_00008"/>
    </source>
</evidence>